<dbReference type="EMBL" id="CM001236">
    <property type="protein sequence ID" value="EHA47669.1"/>
    <property type="molecule type" value="Genomic_DNA"/>
</dbReference>
<dbReference type="RefSeq" id="XP_003720036.1">
    <property type="nucleotide sequence ID" value="XM_003719988.1"/>
</dbReference>
<dbReference type="SMR" id="P0CT07"/>
<dbReference type="STRING" id="242507.P0CT07"/>
<dbReference type="EnsemblFungi" id="MGG_03855T0">
    <property type="protein sequence ID" value="MGG_03855T0"/>
    <property type="gene ID" value="MGG_03855"/>
</dbReference>
<dbReference type="GeneID" id="2677296"/>
<dbReference type="KEGG" id="mgr:MGG_03855"/>
<dbReference type="VEuPathDB" id="FungiDB:MGG_03855"/>
<dbReference type="eggNOG" id="KOG3252">
    <property type="taxonomic scope" value="Eukaryota"/>
</dbReference>
<dbReference type="HOGENOM" id="CLU_076723_0_1_1"/>
<dbReference type="InParanoid" id="P0CT07"/>
<dbReference type="OMA" id="GDDLCAD"/>
<dbReference type="OrthoDB" id="337745at2759"/>
<dbReference type="PHI-base" id="PHI:11816"/>
<dbReference type="Proteomes" id="UP000009058">
    <property type="component" value="Chromosome 6"/>
</dbReference>
<dbReference type="GO" id="GO:0016282">
    <property type="term" value="C:eukaryotic 43S preinitiation complex"/>
    <property type="evidence" value="ECO:0007669"/>
    <property type="project" value="UniProtKB-UniRule"/>
</dbReference>
<dbReference type="GO" id="GO:0033290">
    <property type="term" value="C:eukaryotic 48S preinitiation complex"/>
    <property type="evidence" value="ECO:0007669"/>
    <property type="project" value="UniProtKB-UniRule"/>
</dbReference>
<dbReference type="GO" id="GO:0005852">
    <property type="term" value="C:eukaryotic translation initiation factor 3 complex"/>
    <property type="evidence" value="ECO:0007669"/>
    <property type="project" value="UniProtKB-UniRule"/>
</dbReference>
<dbReference type="GO" id="GO:0043022">
    <property type="term" value="F:ribosome binding"/>
    <property type="evidence" value="ECO:0007669"/>
    <property type="project" value="InterPro"/>
</dbReference>
<dbReference type="GO" id="GO:0003723">
    <property type="term" value="F:RNA binding"/>
    <property type="evidence" value="ECO:0007669"/>
    <property type="project" value="UniProtKB-UniRule"/>
</dbReference>
<dbReference type="GO" id="GO:0003743">
    <property type="term" value="F:translation initiation factor activity"/>
    <property type="evidence" value="ECO:0007669"/>
    <property type="project" value="UniProtKB-UniRule"/>
</dbReference>
<dbReference type="GO" id="GO:0001732">
    <property type="term" value="P:formation of cytoplasmic translation initiation complex"/>
    <property type="evidence" value="ECO:0007669"/>
    <property type="project" value="UniProtKB-UniRule"/>
</dbReference>
<dbReference type="GO" id="GO:0006446">
    <property type="term" value="P:regulation of translational initiation"/>
    <property type="evidence" value="ECO:0007669"/>
    <property type="project" value="InterPro"/>
</dbReference>
<dbReference type="FunFam" id="1.10.10.10:FF:000389">
    <property type="entry name" value="Eukaryotic translation initiation factor 3 subunit K"/>
    <property type="match status" value="1"/>
</dbReference>
<dbReference type="Gene3D" id="1.25.40.250">
    <property type="entry name" value="ARM repeat, domain 1"/>
    <property type="match status" value="1"/>
</dbReference>
<dbReference type="Gene3D" id="1.10.10.10">
    <property type="entry name" value="Winged helix-like DNA-binding domain superfamily/Winged helix DNA-binding domain"/>
    <property type="match status" value="1"/>
</dbReference>
<dbReference type="HAMAP" id="MF_03010">
    <property type="entry name" value="eIF3k"/>
    <property type="match status" value="1"/>
</dbReference>
<dbReference type="InterPro" id="IPR016024">
    <property type="entry name" value="ARM-type_fold"/>
</dbReference>
<dbReference type="InterPro" id="IPR033464">
    <property type="entry name" value="CSN8_PSD8_EIF3K"/>
</dbReference>
<dbReference type="InterPro" id="IPR009374">
    <property type="entry name" value="eIF3k"/>
</dbReference>
<dbReference type="InterPro" id="IPR000717">
    <property type="entry name" value="PCI_dom"/>
</dbReference>
<dbReference type="InterPro" id="IPR016020">
    <property type="entry name" value="Transl_init_fac_sub12_N_euk"/>
</dbReference>
<dbReference type="InterPro" id="IPR036388">
    <property type="entry name" value="WH-like_DNA-bd_sf"/>
</dbReference>
<dbReference type="InterPro" id="IPR036390">
    <property type="entry name" value="WH_DNA-bd_sf"/>
</dbReference>
<dbReference type="PANTHER" id="PTHR13022">
    <property type="entry name" value="EUKARYOTIC TRANSLATION INITIATION FACTOR 3 SUBUNIT 11"/>
    <property type="match status" value="1"/>
</dbReference>
<dbReference type="PANTHER" id="PTHR13022:SF0">
    <property type="entry name" value="EUKARYOTIC TRANSLATION INITIATION FACTOR 3 SUBUNIT K"/>
    <property type="match status" value="1"/>
</dbReference>
<dbReference type="Pfam" id="PF10075">
    <property type="entry name" value="CSN8_PSD8_EIF3K"/>
    <property type="match status" value="1"/>
</dbReference>
<dbReference type="SUPFAM" id="SSF48371">
    <property type="entry name" value="ARM repeat"/>
    <property type="match status" value="1"/>
</dbReference>
<dbReference type="SUPFAM" id="SSF46785">
    <property type="entry name" value="Winged helix' DNA-binding domain"/>
    <property type="match status" value="1"/>
</dbReference>
<dbReference type="PROSITE" id="PS50250">
    <property type="entry name" value="PCI"/>
    <property type="match status" value="1"/>
</dbReference>
<reference key="1">
    <citation type="journal article" date="2005" name="Nature">
        <title>The genome sequence of the rice blast fungus Magnaporthe grisea.</title>
        <authorList>
            <person name="Dean R.A."/>
            <person name="Talbot N.J."/>
            <person name="Ebbole D.J."/>
            <person name="Farman M.L."/>
            <person name="Mitchell T.K."/>
            <person name="Orbach M.J."/>
            <person name="Thon M.R."/>
            <person name="Kulkarni R."/>
            <person name="Xu J.-R."/>
            <person name="Pan H."/>
            <person name="Read N.D."/>
            <person name="Lee Y.-H."/>
            <person name="Carbone I."/>
            <person name="Brown D."/>
            <person name="Oh Y.Y."/>
            <person name="Donofrio N."/>
            <person name="Jeong J.S."/>
            <person name="Soanes D.M."/>
            <person name="Djonovic S."/>
            <person name="Kolomiets E."/>
            <person name="Rehmeyer C."/>
            <person name="Li W."/>
            <person name="Harding M."/>
            <person name="Kim S."/>
            <person name="Lebrun M.-H."/>
            <person name="Bohnert H."/>
            <person name="Coughlan S."/>
            <person name="Butler J."/>
            <person name="Calvo S.E."/>
            <person name="Ma L.-J."/>
            <person name="Nicol R."/>
            <person name="Purcell S."/>
            <person name="Nusbaum C."/>
            <person name="Galagan J.E."/>
            <person name="Birren B.W."/>
        </authorList>
    </citation>
    <scope>NUCLEOTIDE SEQUENCE [LARGE SCALE GENOMIC DNA]</scope>
    <source>
        <strain>70-15 / ATCC MYA-4617 / FGSC 8958</strain>
    </source>
</reference>
<proteinExistence type="inferred from homology"/>
<keyword id="KW-0963">Cytoplasm</keyword>
<keyword id="KW-0396">Initiation factor</keyword>
<keyword id="KW-0648">Protein biosynthesis</keyword>
<keyword id="KW-1185">Reference proteome</keyword>
<feature type="chain" id="PRO_0000365060" description="Eukaryotic translation initiation factor 3 subunit K">
    <location>
        <begin position="1"/>
        <end position="236"/>
    </location>
</feature>
<feature type="domain" description="PCI" evidence="2">
    <location>
        <begin position="48"/>
        <end position="218"/>
    </location>
</feature>
<organism>
    <name type="scientific">Pyricularia oryzae (strain 70-15 / ATCC MYA-4617 / FGSC 8958)</name>
    <name type="common">Rice blast fungus</name>
    <name type="synonym">Magnaporthe oryzae</name>
    <dbReference type="NCBI Taxonomy" id="242507"/>
    <lineage>
        <taxon>Eukaryota</taxon>
        <taxon>Fungi</taxon>
        <taxon>Dikarya</taxon>
        <taxon>Ascomycota</taxon>
        <taxon>Pezizomycotina</taxon>
        <taxon>Sordariomycetes</taxon>
        <taxon>Sordariomycetidae</taxon>
        <taxon>Magnaporthales</taxon>
        <taxon>Pyriculariaceae</taxon>
        <taxon>Pyricularia</taxon>
    </lineage>
</organism>
<evidence type="ECO:0000255" key="1">
    <source>
        <dbReference type="HAMAP-Rule" id="MF_03010"/>
    </source>
</evidence>
<evidence type="ECO:0000255" key="2">
    <source>
        <dbReference type="PROSITE-ProRule" id="PRU01185"/>
    </source>
</evidence>
<protein>
    <recommendedName>
        <fullName evidence="1">Eukaryotic translation initiation factor 3 subunit K</fullName>
        <shortName evidence="1">eIF3k</shortName>
    </recommendedName>
    <alternativeName>
        <fullName evidence="1">eIF-3 p25</fullName>
    </alternativeName>
</protein>
<gene>
    <name type="ORF">MGG_03855</name>
</gene>
<sequence>MPRLPNSEDPPERPDFITNIINGLERYNPEAVGTLEQYLTTQCEERFCDCNANRTLLKLYQLNPDRIKDEVITNILVKAMTLFPSPQFSQALHLLSPSALSQQSELSEAVSKLRALNNQLEGAQYARFWATIESDDLYADLTTDIQGFEEMVRLRIAVLVSQAFREVQLSLMEQWLGLDEAPLKTFITEACGFKIEGDIVQIPKNPDNEAKKAEIREDVNVEMFSRVIRRAWEEVA</sequence>
<comment type="function">
    <text evidence="1">Component of the eukaryotic translation initiation factor 3 (eIF-3) complex, which is involved in protein synthesis of a specialized repertoire of mRNAs and, together with other initiation factors, stimulates binding of mRNA and methionyl-tRNAi to the 40S ribosome. The eIF-3 complex specifically targets and initiates translation of a subset of mRNAs involved in cell proliferation.</text>
</comment>
<comment type="subunit">
    <text evidence="1">Component of the eukaryotic translation initiation factor 3 (eIF-3) complex.</text>
</comment>
<comment type="subcellular location">
    <subcellularLocation>
        <location evidence="1">Cytoplasm</location>
    </subcellularLocation>
</comment>
<comment type="similarity">
    <text evidence="1">Belongs to the eIF-3 subunit K family.</text>
</comment>
<name>EIF3K_PYRO7</name>
<accession>P0CT07</accession>
<accession>G4NHF9</accession>
<accession>Q5G574</accession>